<proteinExistence type="inferred from homology"/>
<gene>
    <name evidence="1" type="primary">mgsA</name>
    <name type="ordered locus">APJL_1523</name>
</gene>
<reference key="1">
    <citation type="journal article" date="2008" name="PLoS ONE">
        <title>Genome biology of Actinobacillus pleuropneumoniae JL03, an isolate of serotype 3 prevalent in China.</title>
        <authorList>
            <person name="Xu Z."/>
            <person name="Zhou Y."/>
            <person name="Li L."/>
            <person name="Zhou R."/>
            <person name="Xiao S."/>
            <person name="Wan Y."/>
            <person name="Zhang S."/>
            <person name="Wang K."/>
            <person name="Li W."/>
            <person name="Li L."/>
            <person name="Jin H."/>
            <person name="Kang M."/>
            <person name="Dalai B."/>
            <person name="Li T."/>
            <person name="Liu L."/>
            <person name="Cheng Y."/>
            <person name="Zhang L."/>
            <person name="Xu T."/>
            <person name="Zheng H."/>
            <person name="Pu S."/>
            <person name="Wang B."/>
            <person name="Gu W."/>
            <person name="Zhang X.L."/>
            <person name="Zhu G.-F."/>
            <person name="Wang S."/>
            <person name="Zhao G.-P."/>
            <person name="Chen H."/>
        </authorList>
    </citation>
    <scope>NUCLEOTIDE SEQUENCE [LARGE SCALE GENOMIC DNA]</scope>
    <source>
        <strain>JL03</strain>
    </source>
</reference>
<feature type="chain" id="PRO_1000128971" description="Methylglyoxal synthase">
    <location>
        <begin position="1"/>
        <end position="152"/>
    </location>
</feature>
<feature type="domain" description="MGS-like" evidence="1">
    <location>
        <begin position="6"/>
        <end position="152"/>
    </location>
</feature>
<feature type="active site" description="Proton donor/acceptor" evidence="1">
    <location>
        <position position="71"/>
    </location>
</feature>
<feature type="binding site" evidence="1">
    <location>
        <position position="19"/>
    </location>
    <ligand>
        <name>substrate</name>
    </ligand>
</feature>
<feature type="binding site" evidence="1">
    <location>
        <position position="23"/>
    </location>
    <ligand>
        <name>substrate</name>
    </ligand>
</feature>
<feature type="binding site" evidence="1">
    <location>
        <begin position="45"/>
        <end position="48"/>
    </location>
    <ligand>
        <name>substrate</name>
    </ligand>
</feature>
<feature type="binding site" evidence="1">
    <location>
        <begin position="65"/>
        <end position="66"/>
    </location>
    <ligand>
        <name>substrate</name>
    </ligand>
</feature>
<feature type="binding site" evidence="1">
    <location>
        <position position="98"/>
    </location>
    <ligand>
        <name>substrate</name>
    </ligand>
</feature>
<protein>
    <recommendedName>
        <fullName evidence="1">Methylglyoxal synthase</fullName>
        <shortName evidence="1">MGS</shortName>
        <ecNumber evidence="1">4.2.3.3</ecNumber>
    </recommendedName>
</protein>
<evidence type="ECO:0000255" key="1">
    <source>
        <dbReference type="HAMAP-Rule" id="MF_00549"/>
    </source>
</evidence>
<sequence>MKTTIRKISARKSIALVAHDSCKQSLIQWTLQHKASLTPHTLYATGTTGHLLARESGLNIQALLSGPMGGDQQLGGLIAEKKIDILIFFWDPMNAAPHDPDVKALMRIATVWNIPVAINETSANFLLSAALFDQEIGINVPDYDGYLAERLA</sequence>
<comment type="function">
    <text evidence="1">Catalyzes the formation of methylglyoxal from dihydroxyacetone phosphate.</text>
</comment>
<comment type="catalytic activity">
    <reaction evidence="1">
        <text>dihydroxyacetone phosphate = methylglyoxal + phosphate</text>
        <dbReference type="Rhea" id="RHEA:17937"/>
        <dbReference type="ChEBI" id="CHEBI:17158"/>
        <dbReference type="ChEBI" id="CHEBI:43474"/>
        <dbReference type="ChEBI" id="CHEBI:57642"/>
        <dbReference type="EC" id="4.2.3.3"/>
    </reaction>
</comment>
<comment type="similarity">
    <text evidence="1">Belongs to the methylglyoxal synthase family.</text>
</comment>
<organism>
    <name type="scientific">Actinobacillus pleuropneumoniae serotype 3 (strain JL03)</name>
    <dbReference type="NCBI Taxonomy" id="434271"/>
    <lineage>
        <taxon>Bacteria</taxon>
        <taxon>Pseudomonadati</taxon>
        <taxon>Pseudomonadota</taxon>
        <taxon>Gammaproteobacteria</taxon>
        <taxon>Pasteurellales</taxon>
        <taxon>Pasteurellaceae</taxon>
        <taxon>Actinobacillus</taxon>
    </lineage>
</organism>
<dbReference type="EC" id="4.2.3.3" evidence="1"/>
<dbReference type="EMBL" id="CP000687">
    <property type="protein sequence ID" value="ABY70075.1"/>
    <property type="molecule type" value="Genomic_DNA"/>
</dbReference>
<dbReference type="RefSeq" id="WP_005602156.1">
    <property type="nucleotide sequence ID" value="NC_010278.1"/>
</dbReference>
<dbReference type="SMR" id="B0BR90"/>
<dbReference type="KEGG" id="apj:APJL_1523"/>
<dbReference type="HOGENOM" id="CLU_120420_0_1_6"/>
<dbReference type="Proteomes" id="UP000008547">
    <property type="component" value="Chromosome"/>
</dbReference>
<dbReference type="GO" id="GO:0005829">
    <property type="term" value="C:cytosol"/>
    <property type="evidence" value="ECO:0007669"/>
    <property type="project" value="TreeGrafter"/>
</dbReference>
<dbReference type="GO" id="GO:0008929">
    <property type="term" value="F:methylglyoxal synthase activity"/>
    <property type="evidence" value="ECO:0007669"/>
    <property type="project" value="UniProtKB-UniRule"/>
</dbReference>
<dbReference type="GO" id="GO:0019242">
    <property type="term" value="P:methylglyoxal biosynthetic process"/>
    <property type="evidence" value="ECO:0007669"/>
    <property type="project" value="UniProtKB-UniRule"/>
</dbReference>
<dbReference type="CDD" id="cd01422">
    <property type="entry name" value="MGS"/>
    <property type="match status" value="1"/>
</dbReference>
<dbReference type="Gene3D" id="3.40.50.1380">
    <property type="entry name" value="Methylglyoxal synthase-like domain"/>
    <property type="match status" value="1"/>
</dbReference>
<dbReference type="HAMAP" id="MF_00549">
    <property type="entry name" value="Methylglyoxal_synth"/>
    <property type="match status" value="1"/>
</dbReference>
<dbReference type="InterPro" id="IPR004363">
    <property type="entry name" value="Methylgl_synth"/>
</dbReference>
<dbReference type="InterPro" id="IPR018148">
    <property type="entry name" value="Methylglyoxal_synth_AS"/>
</dbReference>
<dbReference type="InterPro" id="IPR011607">
    <property type="entry name" value="MGS-like_dom"/>
</dbReference>
<dbReference type="InterPro" id="IPR036914">
    <property type="entry name" value="MGS-like_dom_sf"/>
</dbReference>
<dbReference type="NCBIfam" id="TIGR00160">
    <property type="entry name" value="MGSA"/>
    <property type="match status" value="1"/>
</dbReference>
<dbReference type="NCBIfam" id="NF003559">
    <property type="entry name" value="PRK05234.1"/>
    <property type="match status" value="1"/>
</dbReference>
<dbReference type="PANTHER" id="PTHR30492">
    <property type="entry name" value="METHYLGLYOXAL SYNTHASE"/>
    <property type="match status" value="1"/>
</dbReference>
<dbReference type="PANTHER" id="PTHR30492:SF0">
    <property type="entry name" value="METHYLGLYOXAL SYNTHASE"/>
    <property type="match status" value="1"/>
</dbReference>
<dbReference type="Pfam" id="PF02142">
    <property type="entry name" value="MGS"/>
    <property type="match status" value="1"/>
</dbReference>
<dbReference type="PIRSF" id="PIRSF006614">
    <property type="entry name" value="Methylglyox_syn"/>
    <property type="match status" value="1"/>
</dbReference>
<dbReference type="SMART" id="SM00851">
    <property type="entry name" value="MGS"/>
    <property type="match status" value="1"/>
</dbReference>
<dbReference type="SUPFAM" id="SSF52335">
    <property type="entry name" value="Methylglyoxal synthase-like"/>
    <property type="match status" value="1"/>
</dbReference>
<dbReference type="PROSITE" id="PS01335">
    <property type="entry name" value="METHYLGLYOXAL_SYNTH"/>
    <property type="match status" value="1"/>
</dbReference>
<dbReference type="PROSITE" id="PS51855">
    <property type="entry name" value="MGS"/>
    <property type="match status" value="1"/>
</dbReference>
<name>MGSA_ACTPJ</name>
<keyword id="KW-0456">Lyase</keyword>
<accession>B0BR90</accession>